<protein>
    <recommendedName>
        <fullName evidence="1">Large ribosomal subunit protein bL36</fullName>
    </recommendedName>
    <alternativeName>
        <fullName evidence="2">50S ribosomal protein L36</fullName>
    </alternativeName>
</protein>
<gene>
    <name evidence="1" type="primary">rpmJ</name>
    <name type="ordered locus">Vapar_5049</name>
</gene>
<comment type="similarity">
    <text evidence="1">Belongs to the bacterial ribosomal protein bL36 family.</text>
</comment>
<keyword id="KW-0687">Ribonucleoprotein</keyword>
<keyword id="KW-0689">Ribosomal protein</keyword>
<name>RL36_VARPS</name>
<feature type="chain" id="PRO_1000204562" description="Large ribosomal subunit protein bL36">
    <location>
        <begin position="1"/>
        <end position="37"/>
    </location>
</feature>
<dbReference type="EMBL" id="CP001635">
    <property type="protein sequence ID" value="ACS21651.1"/>
    <property type="molecule type" value="Genomic_DNA"/>
</dbReference>
<dbReference type="SMR" id="C5CQ79"/>
<dbReference type="STRING" id="543728.Vapar_5049"/>
<dbReference type="KEGG" id="vap:Vapar_5049"/>
<dbReference type="eggNOG" id="COG0257">
    <property type="taxonomic scope" value="Bacteria"/>
</dbReference>
<dbReference type="HOGENOM" id="CLU_135723_6_2_4"/>
<dbReference type="GO" id="GO:0005737">
    <property type="term" value="C:cytoplasm"/>
    <property type="evidence" value="ECO:0007669"/>
    <property type="project" value="UniProtKB-ARBA"/>
</dbReference>
<dbReference type="GO" id="GO:1990904">
    <property type="term" value="C:ribonucleoprotein complex"/>
    <property type="evidence" value="ECO:0007669"/>
    <property type="project" value="UniProtKB-KW"/>
</dbReference>
<dbReference type="GO" id="GO:0005840">
    <property type="term" value="C:ribosome"/>
    <property type="evidence" value="ECO:0007669"/>
    <property type="project" value="UniProtKB-KW"/>
</dbReference>
<dbReference type="GO" id="GO:0003735">
    <property type="term" value="F:structural constituent of ribosome"/>
    <property type="evidence" value="ECO:0007669"/>
    <property type="project" value="InterPro"/>
</dbReference>
<dbReference type="GO" id="GO:0006412">
    <property type="term" value="P:translation"/>
    <property type="evidence" value="ECO:0007669"/>
    <property type="project" value="UniProtKB-UniRule"/>
</dbReference>
<dbReference type="HAMAP" id="MF_00251">
    <property type="entry name" value="Ribosomal_bL36"/>
    <property type="match status" value="1"/>
</dbReference>
<dbReference type="InterPro" id="IPR000473">
    <property type="entry name" value="Ribosomal_bL36"/>
</dbReference>
<dbReference type="InterPro" id="IPR035977">
    <property type="entry name" value="Ribosomal_bL36_sp"/>
</dbReference>
<dbReference type="NCBIfam" id="TIGR01022">
    <property type="entry name" value="rpmJ_bact"/>
    <property type="match status" value="1"/>
</dbReference>
<dbReference type="PANTHER" id="PTHR42888">
    <property type="entry name" value="50S RIBOSOMAL PROTEIN L36, CHLOROPLASTIC"/>
    <property type="match status" value="1"/>
</dbReference>
<dbReference type="PANTHER" id="PTHR42888:SF1">
    <property type="entry name" value="LARGE RIBOSOMAL SUBUNIT PROTEIN BL36C"/>
    <property type="match status" value="1"/>
</dbReference>
<dbReference type="Pfam" id="PF00444">
    <property type="entry name" value="Ribosomal_L36"/>
    <property type="match status" value="1"/>
</dbReference>
<dbReference type="SUPFAM" id="SSF57840">
    <property type="entry name" value="Ribosomal protein L36"/>
    <property type="match status" value="1"/>
</dbReference>
<dbReference type="PROSITE" id="PS00828">
    <property type="entry name" value="RIBOSOMAL_L36"/>
    <property type="match status" value="1"/>
</dbReference>
<sequence length="37" mass="4280">MRVSASVKTICRNCKVIRRKGVVRVICTDPRHKQRQG</sequence>
<evidence type="ECO:0000255" key="1">
    <source>
        <dbReference type="HAMAP-Rule" id="MF_00251"/>
    </source>
</evidence>
<evidence type="ECO:0000305" key="2"/>
<accession>C5CQ79</accession>
<organism>
    <name type="scientific">Variovorax paradoxus (strain S110)</name>
    <dbReference type="NCBI Taxonomy" id="543728"/>
    <lineage>
        <taxon>Bacteria</taxon>
        <taxon>Pseudomonadati</taxon>
        <taxon>Pseudomonadota</taxon>
        <taxon>Betaproteobacteria</taxon>
        <taxon>Burkholderiales</taxon>
        <taxon>Comamonadaceae</taxon>
        <taxon>Variovorax</taxon>
    </lineage>
</organism>
<proteinExistence type="inferred from homology"/>
<reference key="1">
    <citation type="journal article" date="2011" name="J. Bacteriol.">
        <title>Complete genome sequence of the metabolically versatile plant growth-promoting endophyte, Variovorax paradoxus S110.</title>
        <authorList>
            <person name="Han J.I."/>
            <person name="Choi H.K."/>
            <person name="Lee S.W."/>
            <person name="Orwin P.M."/>
            <person name="Kim J."/>
            <person name="Laroe S.L."/>
            <person name="Kim T.G."/>
            <person name="O'Neil J."/>
            <person name="Leadbetter J.R."/>
            <person name="Lee S.Y."/>
            <person name="Hur C.G."/>
            <person name="Spain J.C."/>
            <person name="Ovchinnikova G."/>
            <person name="Goodwin L."/>
            <person name="Han C."/>
        </authorList>
    </citation>
    <scope>NUCLEOTIDE SEQUENCE [LARGE SCALE GENOMIC DNA]</scope>
    <source>
        <strain>S110</strain>
    </source>
</reference>